<evidence type="ECO:0000250" key="1"/>
<evidence type="ECO:0000255" key="2"/>
<evidence type="ECO:0000255" key="3">
    <source>
        <dbReference type="PROSITE-ProRule" id="PRU10095"/>
    </source>
</evidence>
<evidence type="ECO:0000256" key="4">
    <source>
        <dbReference type="SAM" id="MobiDB-lite"/>
    </source>
</evidence>
<evidence type="ECO:0000305" key="5"/>
<protein>
    <recommendedName>
        <fullName>Extracellular metalloproteinase 1</fullName>
        <ecNumber>3.4.24.-</ecNumber>
    </recommendedName>
    <alternativeName>
        <fullName>Elastinolytic metalloproteinase MEP1</fullName>
    </alternativeName>
    <alternativeName>
        <fullName>Fungalysin MEP1</fullName>
    </alternativeName>
</protein>
<keyword id="KW-0325">Glycoprotein</keyword>
<keyword id="KW-0378">Hydrolase</keyword>
<keyword id="KW-0479">Metal-binding</keyword>
<keyword id="KW-0482">Metalloprotease</keyword>
<keyword id="KW-0645">Protease</keyword>
<keyword id="KW-0964">Secreted</keyword>
<keyword id="KW-0732">Signal</keyword>
<keyword id="KW-0862">Zinc</keyword>
<keyword id="KW-0865">Zymogen</keyword>
<accession>Q0UC19</accession>
<dbReference type="EC" id="3.4.24.-"/>
<dbReference type="EMBL" id="CH445341">
    <property type="protein sequence ID" value="EAT82089.2"/>
    <property type="molecule type" value="Genomic_DNA"/>
</dbReference>
<dbReference type="RefSeq" id="XP_001800956.1">
    <property type="nucleotide sequence ID" value="XM_001800904.1"/>
</dbReference>
<dbReference type="SMR" id="Q0UC19"/>
<dbReference type="MEROPS" id="M36.001"/>
<dbReference type="GlyCosmos" id="Q0UC19">
    <property type="glycosylation" value="1 site, No reported glycans"/>
</dbReference>
<dbReference type="EnsemblFungi" id="SNOT_10695">
    <property type="protein sequence ID" value="SNOT_10695"/>
    <property type="gene ID" value="SNOG_10695"/>
</dbReference>
<dbReference type="GeneID" id="5977863"/>
<dbReference type="KEGG" id="pno:SNOG_10695"/>
<dbReference type="VEuPathDB" id="FungiDB:JI435_106950"/>
<dbReference type="eggNOG" id="ENOG502QTDC">
    <property type="taxonomic scope" value="Eukaryota"/>
</dbReference>
<dbReference type="HOGENOM" id="CLU_012703_3_0_1"/>
<dbReference type="InParanoid" id="Q0UC19"/>
<dbReference type="Proteomes" id="UP000001055">
    <property type="component" value="Unassembled WGS sequence"/>
</dbReference>
<dbReference type="GO" id="GO:0005576">
    <property type="term" value="C:extracellular region"/>
    <property type="evidence" value="ECO:0007669"/>
    <property type="project" value="UniProtKB-SubCell"/>
</dbReference>
<dbReference type="GO" id="GO:0004222">
    <property type="term" value="F:metalloendopeptidase activity"/>
    <property type="evidence" value="ECO:0007669"/>
    <property type="project" value="InterPro"/>
</dbReference>
<dbReference type="GO" id="GO:0008270">
    <property type="term" value="F:zinc ion binding"/>
    <property type="evidence" value="ECO:0007669"/>
    <property type="project" value="InterPro"/>
</dbReference>
<dbReference type="GO" id="GO:0006508">
    <property type="term" value="P:proteolysis"/>
    <property type="evidence" value="ECO:0007669"/>
    <property type="project" value="UniProtKB-KW"/>
</dbReference>
<dbReference type="CDD" id="cd09596">
    <property type="entry name" value="M36"/>
    <property type="match status" value="1"/>
</dbReference>
<dbReference type="Gene3D" id="3.10.170.10">
    <property type="match status" value="1"/>
</dbReference>
<dbReference type="Gene3D" id="1.10.390.10">
    <property type="entry name" value="Neutral Protease Domain 2"/>
    <property type="match status" value="1"/>
</dbReference>
<dbReference type="InterPro" id="IPR011096">
    <property type="entry name" value="FTP_domain"/>
</dbReference>
<dbReference type="InterPro" id="IPR050371">
    <property type="entry name" value="Fungal_virulence_M36"/>
</dbReference>
<dbReference type="InterPro" id="IPR001842">
    <property type="entry name" value="Peptidase_M36"/>
</dbReference>
<dbReference type="InterPro" id="IPR027268">
    <property type="entry name" value="Peptidase_M4/M1_CTD_sf"/>
</dbReference>
<dbReference type="PANTHER" id="PTHR33478">
    <property type="entry name" value="EXTRACELLULAR METALLOPROTEINASE MEP"/>
    <property type="match status" value="1"/>
</dbReference>
<dbReference type="PANTHER" id="PTHR33478:SF1">
    <property type="entry name" value="EXTRACELLULAR METALLOPROTEINASE MEP"/>
    <property type="match status" value="1"/>
</dbReference>
<dbReference type="Pfam" id="PF07504">
    <property type="entry name" value="FTP"/>
    <property type="match status" value="1"/>
</dbReference>
<dbReference type="Pfam" id="PF02128">
    <property type="entry name" value="Peptidase_M36"/>
    <property type="match status" value="1"/>
</dbReference>
<dbReference type="PRINTS" id="PR00999">
    <property type="entry name" value="FUNGALYSIN"/>
</dbReference>
<dbReference type="SUPFAM" id="SSF55486">
    <property type="entry name" value="Metalloproteases ('zincins'), catalytic domain"/>
    <property type="match status" value="1"/>
</dbReference>
<dbReference type="PROSITE" id="PS00142">
    <property type="entry name" value="ZINC_PROTEASE"/>
    <property type="match status" value="1"/>
</dbReference>
<comment type="function">
    <text evidence="1">Secreted metalloproteinase that allows assimilation of proteinaceous substrates.</text>
</comment>
<comment type="cofactor">
    <cofactor evidence="1">
        <name>Zn(2+)</name>
        <dbReference type="ChEBI" id="CHEBI:29105"/>
    </cofactor>
    <text evidence="1">Binds 1 zinc ion per subunit.</text>
</comment>
<comment type="subcellular location">
    <subcellularLocation>
        <location evidence="1">Secreted</location>
    </subcellularLocation>
</comment>
<comment type="induction">
    <text>Expression is controlled by the prtT transcription factor.</text>
</comment>
<comment type="similarity">
    <text evidence="5">Belongs to the peptidase M36 family.</text>
</comment>
<organism>
    <name type="scientific">Phaeosphaeria nodorum (strain SN15 / ATCC MYA-4574 / FGSC 10173)</name>
    <name type="common">Glume blotch fungus</name>
    <name type="synonym">Parastagonospora nodorum</name>
    <dbReference type="NCBI Taxonomy" id="321614"/>
    <lineage>
        <taxon>Eukaryota</taxon>
        <taxon>Fungi</taxon>
        <taxon>Dikarya</taxon>
        <taxon>Ascomycota</taxon>
        <taxon>Pezizomycotina</taxon>
        <taxon>Dothideomycetes</taxon>
        <taxon>Pleosporomycetidae</taxon>
        <taxon>Pleosporales</taxon>
        <taxon>Pleosporineae</taxon>
        <taxon>Phaeosphaeriaceae</taxon>
        <taxon>Parastagonospora</taxon>
    </lineage>
</organism>
<gene>
    <name type="primary">MEP1</name>
    <name type="ORF">SNOG_10695</name>
</gene>
<reference key="1">
    <citation type="journal article" date="2007" name="Plant Cell">
        <title>Dothideomycete-plant interactions illuminated by genome sequencing and EST analysis of the wheat pathogen Stagonospora nodorum.</title>
        <authorList>
            <person name="Hane J.K."/>
            <person name="Lowe R.G.T."/>
            <person name="Solomon P.S."/>
            <person name="Tan K.-C."/>
            <person name="Schoch C.L."/>
            <person name="Spatafora J.W."/>
            <person name="Crous P.W."/>
            <person name="Kodira C.D."/>
            <person name="Birren B.W."/>
            <person name="Galagan J.E."/>
            <person name="Torriani S.F.F."/>
            <person name="McDonald B.A."/>
            <person name="Oliver R.P."/>
        </authorList>
    </citation>
    <scope>NUCLEOTIDE SEQUENCE [LARGE SCALE GENOMIC DNA]</scope>
    <source>
        <strain>SN15 / ATCC MYA-4574 / FGSC 10173</strain>
    </source>
</reference>
<name>MEP1_PHANO</name>
<proteinExistence type="evidence at transcript level"/>
<sequence>MLSSLLAGAGLVALAASHPTSHGNALTRRAVDINAFRLTATSEYVNATVAVSEPSLRFLKRADYLETATELVKSVAKDATFRVVEDHYVGSNGIAHVNFKQTANGLDIDNADFNINVAKDGSIFSYGNSFYTGAIPANPLQKRDFSDPVDALKAANDKLQLAVTAEKASAESTGAKETFTLKGTSGAVKDPEAKLVYLVKSDGNLALTWRVETDIMSNWLLTYVDAATNQEIHGVVDYSADATYQVYPWGLNDPTEGSRAVVTNPWDTTASEFTWQGTGTTTYNVPRGNNAIAQSNTDGGSDYLSNYRPTSTSQNFSYPYTLQMSPPSTYVDASVTQLFYTANVYHDLLHSLGFNERAGNFEVNNNGAGGSGNDMVILNTHDGSDTNNANFATPPDGQPGRMRMFLWDLSTPNRDSSFEAGVVIHEYTHGLSNRLTGGPANSNCLNALESGGMGEGWGDFMATAIRLKAGDTRAKDYTMGSWIANDPKGIRTYPYSTSLTTNPHKYTDVNNLRGVHPIGTVWATMLYEVMWNLIDRYGKNDGAKPTFGANGAPTDGKYLAMKLVVDGMALPNFVQARDAILDADVALTGGANKCDIWKGFAKRGLGSGARYSSTARTGSTALPSGC</sequence>
<feature type="signal peptide" evidence="2">
    <location>
        <begin position="1"/>
        <end position="17"/>
    </location>
</feature>
<feature type="propeptide" id="PRO_0000407156" evidence="1">
    <location>
        <begin position="18"/>
        <end position="241"/>
    </location>
</feature>
<feature type="chain" id="PRO_0000407157" description="Extracellular metalloproteinase 1">
    <location>
        <begin position="242"/>
        <end position="626"/>
    </location>
</feature>
<feature type="region of interest" description="Disordered" evidence="4">
    <location>
        <begin position="606"/>
        <end position="626"/>
    </location>
</feature>
<feature type="compositionally biased region" description="Polar residues" evidence="4">
    <location>
        <begin position="610"/>
        <end position="626"/>
    </location>
</feature>
<feature type="active site" evidence="3">
    <location>
        <position position="426"/>
    </location>
</feature>
<feature type="binding site" evidence="3">
    <location>
        <position position="425"/>
    </location>
    <ligand>
        <name>Zn(2+)</name>
        <dbReference type="ChEBI" id="CHEBI:29105"/>
        <note>catalytic</note>
    </ligand>
</feature>
<feature type="binding site" evidence="3">
    <location>
        <position position="429"/>
    </location>
    <ligand>
        <name>Zn(2+)</name>
        <dbReference type="ChEBI" id="CHEBI:29105"/>
        <note>catalytic</note>
    </ligand>
</feature>
<feature type="glycosylation site" description="N-linked (GlcNAc...) asparagine" evidence="2">
    <location>
        <position position="315"/>
    </location>
</feature>